<reference key="1">
    <citation type="journal article" date="1996" name="J. Biochem.">
        <title>Primary structure of the pig homologue of human IHRP: inter-alpha-trypsin inhibitor family heavy chain-related protein.</title>
        <authorList>
            <person name="Hashimoto K."/>
            <person name="Tobe T."/>
            <person name="Sumiya J."/>
            <person name="Sano Y."/>
            <person name="Choi-Miura N.-H."/>
            <person name="Ozawa A."/>
            <person name="Yasue H."/>
            <person name="Tomita M."/>
        </authorList>
    </citation>
    <scope>NUCLEOTIDE SEQUENCE [MRNA]</scope>
    <scope>PROTEOLYTIC PROCESSING</scope>
    <scope>PROTEIN SEQUENCE OF 28-36; 695-703 AND 710-722</scope>
    <source>
        <tissue>Liver</tissue>
    </source>
</reference>
<reference key="2">
    <citation type="journal article" date="1990" name="Surgery">
        <title>Molecular biology of circulatory shock. Part II. Expression of four groups of hepatic genes is enhanced after resuscitation from cardiogenic shock.</title>
        <authorList>
            <person name="Buchman T.G."/>
            <person name="Cabin D.E."/>
            <person name="Vickers S."/>
            <person name="Deutschman C.S."/>
            <person name="Delgado E."/>
            <person name="Sussman M.M."/>
            <person name="Bulkley G.B."/>
        </authorList>
    </citation>
    <scope>PRELIMINARY NUCLEOTIDE SEQUENCE [MRNA] OF 267-556</scope>
    <scope>TISSUE SPECIFICITY</scope>
    <scope>INDUCTION</scope>
    <source>
        <tissue>Liver</tissue>
    </source>
</reference>
<reference key="3">
    <citation type="journal article" date="1995" name="FEBS Lett.">
        <title>The major acute phase serum protein in pigs is homologous to human plasma kallikrein sensitive PK-120.</title>
        <authorList>
            <person name="Gonzalez-Ramon N."/>
            <person name="Alava M.A."/>
            <person name="Sarsa J.A."/>
            <person name="Pineiro M."/>
            <person name="Escartin A."/>
            <person name="Garcia-Gil A."/>
            <person name="Lampreave F."/>
            <person name="Pineiro A."/>
        </authorList>
    </citation>
    <scope>PROTEIN SEQUENCE OF 28-54 AND 223-240</scope>
    <source>
        <tissue>Serum</tissue>
    </source>
</reference>
<reference key="4">
    <citation type="journal article" date="2000" name="Eur. J. Biochem.">
        <title>Pig MAP/ITIH4 and haptoglobin are interleukin-6-dependent acute-phase plasma proteins in porcine primary cultured hepatocytes.</title>
        <authorList>
            <person name="Gonzalez-Ramon N."/>
            <person name="Hoebe K."/>
            <person name="Alava M.A."/>
            <person name="Van Leengoed L."/>
            <person name="Pineiro M."/>
            <person name="Carmona S."/>
            <person name="Iturralde M."/>
            <person name="Lampreave F."/>
            <person name="Pineiro A."/>
        </authorList>
    </citation>
    <scope>FUNCTION</scope>
    <scope>INDUCTION</scope>
    <scope>SUBCELLULAR LOCATION</scope>
</reference>
<accession>P79263</accession>
<organism>
    <name type="scientific">Sus scrofa</name>
    <name type="common">Pig</name>
    <dbReference type="NCBI Taxonomy" id="9823"/>
    <lineage>
        <taxon>Eukaryota</taxon>
        <taxon>Metazoa</taxon>
        <taxon>Chordata</taxon>
        <taxon>Craniata</taxon>
        <taxon>Vertebrata</taxon>
        <taxon>Euteleostomi</taxon>
        <taxon>Mammalia</taxon>
        <taxon>Eutheria</taxon>
        <taxon>Laurasiatheria</taxon>
        <taxon>Artiodactyla</taxon>
        <taxon>Suina</taxon>
        <taxon>Suidae</taxon>
        <taxon>Sus</taxon>
    </lineage>
</organism>
<proteinExistence type="evidence at protein level"/>
<feature type="signal peptide" evidence="9 10">
    <location>
        <begin position="1"/>
        <end position="27"/>
    </location>
</feature>
<feature type="chain" id="PRO_0000016544" description="Inter-alpha-trypsin inhibitor heavy chain H4">
    <location>
        <begin position="28"/>
        <end position="921"/>
    </location>
</feature>
<feature type="domain" description="VIT" evidence="5">
    <location>
        <begin position="28"/>
        <end position="146"/>
    </location>
</feature>
<feature type="domain" description="VWFA" evidence="4">
    <location>
        <begin position="270"/>
        <end position="428"/>
    </location>
</feature>
<feature type="region of interest" description="Disordered" evidence="6">
    <location>
        <begin position="591"/>
        <end position="646"/>
    </location>
</feature>
<feature type="compositionally biased region" description="Polar residues" evidence="6">
    <location>
        <begin position="608"/>
        <end position="623"/>
    </location>
</feature>
<feature type="glycosylation site" description="N-linked (GlcNAc...) asparagine" evidence="3">
    <location>
        <position position="80"/>
    </location>
</feature>
<feature type="glycosylation site" description="N-linked (GlcNAc...) asparagine" evidence="3">
    <location>
        <position position="205"/>
    </location>
</feature>
<feature type="glycosylation site" description="N-linked (GlcNAc...) asparagine" evidence="3">
    <location>
        <position position="242"/>
    </location>
</feature>
<feature type="glycosylation site" description="N-linked (GlcNAc...) asparagine" evidence="3">
    <location>
        <position position="513"/>
    </location>
</feature>
<feature type="glycosylation site" description="N-linked (GlcNAc...) asparagine" evidence="3">
    <location>
        <position position="577"/>
    </location>
</feature>
<feature type="glycosylation site" description="O-linked (GalNAc...) threonine" evidence="2">
    <location>
        <position position="712"/>
    </location>
</feature>
<feature type="disulfide bond" evidence="1">
    <location>
        <begin position="738"/>
        <end position="916"/>
    </location>
</feature>
<feature type="sequence conflict" description="In Ref. 3; AA sequence." evidence="11" ref="3">
    <original>HT</original>
    <variation>SK</variation>
    <location>
        <begin position="49"/>
        <end position="50"/>
    </location>
</feature>
<feature type="sequence conflict" description="In Ref. 1; AA sequence." evidence="11" ref="1">
    <original>D</original>
    <variation>H</variation>
    <location>
        <position position="703"/>
    </location>
</feature>
<sequence>MKTLSPTGYGLLLVLPLLLAVLQSTTAHKNDINIYSLTVDSKVSSRFAHTVVTSRVVNKGSAVQEATFQMELPKKAFITNFSMIIDGVTYPGNIKEKAAAQEQYSAVARGESAGLVRATGRKTEQFQVAVSVAPAAKVTFELVYEELLARHLGVYELLLKIQPQQLVKHLQMDIHIFEPQGISFLETESTFMTNELAEALTISQNKTKAHIRFKPTLSQQQKSPEQQETVLDGNFIVRYDVNRTVTGGSIQIENGYFVHYFAPEVWSAIPKNVIFVIDTSGSMRGRKIQQTREALIKILGDLGSRDQFNLVSFSGEAPRRRAVAASAENVEEAKSYAAEIHAQGGTNINDAMLMAVQLLERANREELLPARSVTFIILLTDGDPTVGETNPSKIQKNVREAIDGQHSLFCLGFGFDVPYAFLEKMALENGGLARRIYEDSDSALQLEDFYQEVANPLLRLVAFEYPSNAVEEVTQDNFRLFFKGSELVVAGKLRDQSPDVLSAKVRGQLHMENVTFVMESRVAEQEAEFLSPKYIFHSFMERLWAYLTIQQLLAQTVSASDAEKKALEARALSLSLNYSFVTPLTSMVITKPEGQEQSQVAEKPVENGNRQGNTHSGHSSFQFHSVGDRTSRLTGGSSVDPVFSHRRGWKGQAQGFEKMSYLPPRLGPPGPLQPTRFSHPFSRITLDRVLPEVLSVPDETSHDMDSRIIGATIPPPPARIQAPSVILPLPGQSVDQLCVDLKHSQGPVKLLSDPGQGVEVTGHYEREKARFSWIEVTFKHPPLQVRASLEHIVVIRNRQSSAYKWKETLYSVMPGLKITMDKAGLLLLSSPNRVTIGLLSWDGPGKGLRLLLRDTDHFSSQISGTFGQFYQDVVWGPPAAADDSKRTVTVQGHDHSATRELKLDYQEGSPGKEISCWTVVL</sequence>
<keyword id="KW-0011">Acute phase</keyword>
<keyword id="KW-0903">Direct protein sequencing</keyword>
<keyword id="KW-1015">Disulfide bond</keyword>
<keyword id="KW-0325">Glycoprotein</keyword>
<keyword id="KW-0646">Protease inhibitor</keyword>
<keyword id="KW-1185">Reference proteome</keyword>
<keyword id="KW-0964">Secreted</keyword>
<keyword id="KW-0722">Serine protease inhibitor</keyword>
<keyword id="KW-0732">Signal</keyword>
<name>ITIH4_PIG</name>
<gene>
    <name type="primary">ITIH4</name>
    <name type="synonym">IHRP</name>
</gene>
<dbReference type="EMBL" id="U43164">
    <property type="protein sequence ID" value="AAD00024.1"/>
    <property type="molecule type" value="mRNA"/>
</dbReference>
<dbReference type="EMBL" id="S82800">
    <property type="protein sequence ID" value="AAB46821.1"/>
    <property type="molecule type" value="mRNA"/>
</dbReference>
<dbReference type="EMBL" id="M29507">
    <property type="status" value="NOT_ANNOTATED_CDS"/>
    <property type="molecule type" value="mRNA"/>
</dbReference>
<dbReference type="PIR" id="JC4625">
    <property type="entry name" value="JC4625"/>
</dbReference>
<dbReference type="RefSeq" id="NP_001001537.1">
    <property type="nucleotide sequence ID" value="NM_001001537.1"/>
</dbReference>
<dbReference type="SMR" id="P79263"/>
<dbReference type="FunCoup" id="P79263">
    <property type="interactions" value="233"/>
</dbReference>
<dbReference type="STRING" id="9823.ENSSSCP00000034791"/>
<dbReference type="GlyCosmos" id="P79263">
    <property type="glycosylation" value="6 sites, No reported glycans"/>
</dbReference>
<dbReference type="GlyGen" id="P79263">
    <property type="glycosylation" value="6 sites"/>
</dbReference>
<dbReference type="PaxDb" id="9823-ENSSSCP00000012206"/>
<dbReference type="PeptideAtlas" id="P79263"/>
<dbReference type="GeneID" id="396799"/>
<dbReference type="KEGG" id="ssc:396799"/>
<dbReference type="CTD" id="3700"/>
<dbReference type="eggNOG" id="ENOG502QPS2">
    <property type="taxonomic scope" value="Eukaryota"/>
</dbReference>
<dbReference type="InParanoid" id="P79263"/>
<dbReference type="OrthoDB" id="299997at2759"/>
<dbReference type="Proteomes" id="UP000008227">
    <property type="component" value="Unplaced"/>
</dbReference>
<dbReference type="Proteomes" id="UP000314985">
    <property type="component" value="Unplaced"/>
</dbReference>
<dbReference type="Proteomes" id="UP000694570">
    <property type="component" value="Unplaced"/>
</dbReference>
<dbReference type="Proteomes" id="UP000694571">
    <property type="component" value="Unplaced"/>
</dbReference>
<dbReference type="Proteomes" id="UP000694720">
    <property type="component" value="Unplaced"/>
</dbReference>
<dbReference type="Proteomes" id="UP000694722">
    <property type="component" value="Unplaced"/>
</dbReference>
<dbReference type="Proteomes" id="UP000694723">
    <property type="component" value="Unplaced"/>
</dbReference>
<dbReference type="Proteomes" id="UP000694724">
    <property type="component" value="Unplaced"/>
</dbReference>
<dbReference type="Proteomes" id="UP000694725">
    <property type="component" value="Unplaced"/>
</dbReference>
<dbReference type="Proteomes" id="UP000694726">
    <property type="component" value="Unplaced"/>
</dbReference>
<dbReference type="Proteomes" id="UP000694727">
    <property type="component" value="Unplaced"/>
</dbReference>
<dbReference type="Proteomes" id="UP000694728">
    <property type="component" value="Unplaced"/>
</dbReference>
<dbReference type="GO" id="GO:0005576">
    <property type="term" value="C:extracellular region"/>
    <property type="evidence" value="ECO:0007669"/>
    <property type="project" value="UniProtKB-SubCell"/>
</dbReference>
<dbReference type="GO" id="GO:0004867">
    <property type="term" value="F:serine-type endopeptidase inhibitor activity"/>
    <property type="evidence" value="ECO:0007669"/>
    <property type="project" value="UniProtKB-KW"/>
</dbReference>
<dbReference type="GO" id="GO:0006953">
    <property type="term" value="P:acute-phase response"/>
    <property type="evidence" value="ECO:0000270"/>
    <property type="project" value="UniProtKB"/>
</dbReference>
<dbReference type="GO" id="GO:0030212">
    <property type="term" value="P:hyaluronan metabolic process"/>
    <property type="evidence" value="ECO:0007669"/>
    <property type="project" value="InterPro"/>
</dbReference>
<dbReference type="GO" id="GO:0034097">
    <property type="term" value="P:response to cytokine"/>
    <property type="evidence" value="ECO:0000270"/>
    <property type="project" value="UniProtKB"/>
</dbReference>
<dbReference type="CDD" id="cd01461">
    <property type="entry name" value="vWA_interalpha_trypsin_inhibitor"/>
    <property type="match status" value="1"/>
</dbReference>
<dbReference type="FunFam" id="3.40.50.410:FF:000013">
    <property type="entry name" value="inter-alpha-trypsin inhibitor heavy chain H2"/>
    <property type="match status" value="1"/>
</dbReference>
<dbReference type="Gene3D" id="3.40.50.410">
    <property type="entry name" value="von Willebrand factor, type A domain"/>
    <property type="match status" value="1"/>
</dbReference>
<dbReference type="InterPro" id="IPR010600">
    <property type="entry name" value="ITI_HC_C"/>
</dbReference>
<dbReference type="InterPro" id="IPR050934">
    <property type="entry name" value="ITIH"/>
</dbReference>
<dbReference type="InterPro" id="IPR013694">
    <property type="entry name" value="VIT"/>
</dbReference>
<dbReference type="InterPro" id="IPR002035">
    <property type="entry name" value="VWF_A"/>
</dbReference>
<dbReference type="InterPro" id="IPR036465">
    <property type="entry name" value="vWFA_dom_sf"/>
</dbReference>
<dbReference type="PANTHER" id="PTHR10338">
    <property type="entry name" value="INTER-ALPHA-TRYPSIN INHIBITOR HEAVY CHAIN FAMILY MEMBER"/>
    <property type="match status" value="1"/>
</dbReference>
<dbReference type="PANTHER" id="PTHR10338:SF119">
    <property type="entry name" value="INTER-ALPHA-TRYPSIN INHIBITOR HEAVY CHAIN H4"/>
    <property type="match status" value="1"/>
</dbReference>
<dbReference type="Pfam" id="PF06668">
    <property type="entry name" value="ITI_HC_C"/>
    <property type="match status" value="1"/>
</dbReference>
<dbReference type="Pfam" id="PF08487">
    <property type="entry name" value="VIT"/>
    <property type="match status" value="1"/>
</dbReference>
<dbReference type="Pfam" id="PF00092">
    <property type="entry name" value="VWA"/>
    <property type="match status" value="1"/>
</dbReference>
<dbReference type="SMART" id="SM00609">
    <property type="entry name" value="VIT"/>
    <property type="match status" value="1"/>
</dbReference>
<dbReference type="SMART" id="SM00327">
    <property type="entry name" value="VWA"/>
    <property type="match status" value="1"/>
</dbReference>
<dbReference type="SUPFAM" id="SSF53300">
    <property type="entry name" value="vWA-like"/>
    <property type="match status" value="1"/>
</dbReference>
<dbReference type="PROSITE" id="PS51468">
    <property type="entry name" value="VIT"/>
    <property type="match status" value="1"/>
</dbReference>
<dbReference type="PROSITE" id="PS50234">
    <property type="entry name" value="VWFA"/>
    <property type="match status" value="1"/>
</dbReference>
<protein>
    <recommendedName>
        <fullName>Inter-alpha-trypsin inhibitor heavy chain H4</fullName>
        <shortName>ITI heavy chain H4</shortName>
        <shortName>ITI-HC4</shortName>
        <shortName>Inter-alpha-inhibitor heavy chain 4</shortName>
    </recommendedName>
    <alternativeName>
        <fullName>Inter-alpha-trypsin inhibitor family heavy chain-related protein</fullName>
        <shortName>IHRP</shortName>
    </alternativeName>
    <alternativeName>
        <fullName>Major acute phase protein</fullName>
        <shortName>MAP</shortName>
    </alternativeName>
</protein>
<comment type="function">
    <text evidence="7">Type II acute-phase protein (APP) involved in inflammatory responses to trauma. May also play a role in liver development or regeneration.</text>
</comment>
<comment type="subunit">
    <text evidence="1">Interacts (via C-terminus) with DNAJC1 (via SANT 2 domain).</text>
</comment>
<comment type="subcellular location">
    <subcellularLocation>
        <location evidence="7">Secreted</location>
    </subcellularLocation>
</comment>
<comment type="tissue specificity">
    <text evidence="8">Liver specific.</text>
</comment>
<comment type="induction">
    <text evidence="7 8">Levels increase significantly after cardiogenic shock. Specifically induced by the cytokine IL6 in hepatocytes.</text>
</comment>
<comment type="PTM">
    <text evidence="1">Appears to be both N- and O-glycosylated.</text>
</comment>
<comment type="PTM">
    <text>Cleaved by plasma kallikrein to yield 55- and 25-kDa fragments.</text>
</comment>
<comment type="similarity">
    <text evidence="11">Belongs to the ITIH family.</text>
</comment>
<comment type="sequence caution" evidence="11">
    <conflict type="frameshift">
        <sequence resource="EMBL" id="M29507"/>
    </conflict>
</comment>
<comment type="sequence caution" evidence="11">
    <conflict type="miscellaneous discrepancy">
        <sequence resource="EMBL" id="M29507"/>
    </conflict>
    <text>Sequencing errors.</text>
</comment>
<evidence type="ECO:0000250" key="1"/>
<evidence type="ECO:0000250" key="2">
    <source>
        <dbReference type="UniProtKB" id="Q3T052"/>
    </source>
</evidence>
<evidence type="ECO:0000255" key="3"/>
<evidence type="ECO:0000255" key="4">
    <source>
        <dbReference type="PROSITE-ProRule" id="PRU00219"/>
    </source>
</evidence>
<evidence type="ECO:0000255" key="5">
    <source>
        <dbReference type="PROSITE-ProRule" id="PRU00801"/>
    </source>
</evidence>
<evidence type="ECO:0000256" key="6">
    <source>
        <dbReference type="SAM" id="MobiDB-lite"/>
    </source>
</evidence>
<evidence type="ECO:0000269" key="7">
    <source>
    </source>
</evidence>
<evidence type="ECO:0000269" key="8">
    <source>
    </source>
</evidence>
<evidence type="ECO:0000269" key="9">
    <source>
    </source>
</evidence>
<evidence type="ECO:0000269" key="10">
    <source>
    </source>
</evidence>
<evidence type="ECO:0000305" key="11"/>